<organism>
    <name type="scientific">Arabidopsis thaliana</name>
    <name type="common">Mouse-ear cress</name>
    <dbReference type="NCBI Taxonomy" id="3702"/>
    <lineage>
        <taxon>Eukaryota</taxon>
        <taxon>Viridiplantae</taxon>
        <taxon>Streptophyta</taxon>
        <taxon>Embryophyta</taxon>
        <taxon>Tracheophyta</taxon>
        <taxon>Spermatophyta</taxon>
        <taxon>Magnoliopsida</taxon>
        <taxon>eudicotyledons</taxon>
        <taxon>Gunneridae</taxon>
        <taxon>Pentapetalae</taxon>
        <taxon>rosids</taxon>
        <taxon>malvids</taxon>
        <taxon>Brassicales</taxon>
        <taxon>Brassicaceae</taxon>
        <taxon>Camelineae</taxon>
        <taxon>Arabidopsis</taxon>
    </lineage>
</organism>
<accession>Q9XEF0</accession>
<evidence type="ECO:0000255" key="1">
    <source>
        <dbReference type="PROSITE-ProRule" id="PRU00981"/>
    </source>
</evidence>
<evidence type="ECO:0000269" key="2">
    <source>
    </source>
</evidence>
<evidence type="ECO:0000305" key="3"/>
<gene>
    <name type="primary">BHLH51</name>
    <name type="synonym">EN57</name>
    <name type="ordered locus">At2g40200</name>
    <name type="ORF">T7M7.8</name>
</gene>
<comment type="subunit">
    <text evidence="3">Homodimer.</text>
</comment>
<comment type="subcellular location">
    <subcellularLocation>
        <location evidence="1">Nucleus</location>
    </subcellularLocation>
</comment>
<comment type="tissue specificity">
    <text evidence="2">Expressed constitutively in roots, stems, and flowers.</text>
</comment>
<comment type="induction">
    <text evidence="2">Repressed by salicylic acid (SA) treatment.</text>
</comment>
<proteinExistence type="evidence at transcript level"/>
<protein>
    <recommendedName>
        <fullName>Transcription factor bHLH51</fullName>
    </recommendedName>
    <alternativeName>
        <fullName>Basic helix-loop-helix protein 51</fullName>
        <shortName>AtbHLH51</shortName>
        <shortName>bHLH 51</shortName>
    </alternativeName>
    <alternativeName>
        <fullName>Transcription factor EN 57</fullName>
    </alternativeName>
    <alternativeName>
        <fullName>bHLH transcription factor bHLH051</fullName>
    </alternativeName>
</protein>
<reference key="1">
    <citation type="journal article" date="1999" name="Genome Res.">
        <title>A cluster of ABA-regulated genes on Arabidopsis thaliana BAC T07M07.</title>
        <authorList>
            <person name="Wang M.L."/>
            <person name="Belmonte S."/>
            <person name="Kim U."/>
            <person name="Dolan M."/>
            <person name="Morris J.W."/>
            <person name="Goodman H.M."/>
        </authorList>
    </citation>
    <scope>NUCLEOTIDE SEQUENCE [GENOMIC DNA]</scope>
</reference>
<reference key="2">
    <citation type="journal article" date="2003" name="Mol. Biol. Evol.">
        <title>The basic helix-loop-helix transcription factor family in plants: a genome-wide study of protein structure and functional diversity.</title>
        <authorList>
            <person name="Heim M.A."/>
            <person name="Jakoby M."/>
            <person name="Werber M."/>
            <person name="Martin C."/>
            <person name="Weisshaar B."/>
            <person name="Bailey P.C."/>
        </authorList>
    </citation>
    <scope>NUCLEOTIDE SEQUENCE [MRNA]</scope>
    <scope>TISSUE SPECIFICITY</scope>
    <scope>INDUCTION</scope>
    <scope>GENE FAMILY</scope>
    <scope>NOMENCLATURE</scope>
    <source>
        <strain>cv. Columbia</strain>
    </source>
</reference>
<reference key="3">
    <citation type="journal article" date="1999" name="Nature">
        <title>Sequence and analysis of chromosome 2 of the plant Arabidopsis thaliana.</title>
        <authorList>
            <person name="Lin X."/>
            <person name="Kaul S."/>
            <person name="Rounsley S.D."/>
            <person name="Shea T.P."/>
            <person name="Benito M.-I."/>
            <person name="Town C.D."/>
            <person name="Fujii C.Y."/>
            <person name="Mason T.M."/>
            <person name="Bowman C.L."/>
            <person name="Barnstead M.E."/>
            <person name="Feldblyum T.V."/>
            <person name="Buell C.R."/>
            <person name="Ketchum K.A."/>
            <person name="Lee J.J."/>
            <person name="Ronning C.M."/>
            <person name="Koo H.L."/>
            <person name="Moffat K.S."/>
            <person name="Cronin L.A."/>
            <person name="Shen M."/>
            <person name="Pai G."/>
            <person name="Van Aken S."/>
            <person name="Umayam L."/>
            <person name="Tallon L.J."/>
            <person name="Gill J.E."/>
            <person name="Adams M.D."/>
            <person name="Carrera A.J."/>
            <person name="Creasy T.H."/>
            <person name="Goodman H.M."/>
            <person name="Somerville C.R."/>
            <person name="Copenhaver G.P."/>
            <person name="Preuss D."/>
            <person name="Nierman W.C."/>
            <person name="White O."/>
            <person name="Eisen J.A."/>
            <person name="Salzberg S.L."/>
            <person name="Fraser C.M."/>
            <person name="Venter J.C."/>
        </authorList>
    </citation>
    <scope>NUCLEOTIDE SEQUENCE [LARGE SCALE GENOMIC DNA]</scope>
    <source>
        <strain>cv. Columbia</strain>
    </source>
</reference>
<reference key="4">
    <citation type="journal article" date="2017" name="Plant J.">
        <title>Araport11: a complete reannotation of the Arabidopsis thaliana reference genome.</title>
        <authorList>
            <person name="Cheng C.Y."/>
            <person name="Krishnakumar V."/>
            <person name="Chan A.P."/>
            <person name="Thibaud-Nissen F."/>
            <person name="Schobel S."/>
            <person name="Town C.D."/>
        </authorList>
    </citation>
    <scope>GENOME REANNOTATION</scope>
    <source>
        <strain>cv. Columbia</strain>
    </source>
</reference>
<reference key="5">
    <citation type="submission" date="2007-01" db="EMBL/GenBank/DDBJ databases">
        <title>Arabidopsis ORF clones.</title>
        <authorList>
            <person name="Bautista V.R."/>
            <person name="Kim C.J."/>
            <person name="Chen H."/>
            <person name="Wu S.Y."/>
            <person name="De Los Reyes C."/>
            <person name="Ecker J.R."/>
        </authorList>
    </citation>
    <scope>NUCLEOTIDE SEQUENCE [LARGE SCALE MRNA]</scope>
    <source>
        <strain>cv. Columbia</strain>
    </source>
</reference>
<reference key="6">
    <citation type="journal article" date="2003" name="Plant Cell">
        <title>The Arabidopsis basic/helix-loop-helix transcription factor family.</title>
        <authorList>
            <person name="Toledo-Ortiz G."/>
            <person name="Huq E."/>
            <person name="Quail P.H."/>
        </authorList>
    </citation>
    <scope>GENE FAMILY</scope>
</reference>
<reference key="7">
    <citation type="journal article" date="2003" name="Plant Cell">
        <title>Update on the basic helix-loop-helix transcription factor gene family in Arabidopsis thaliana.</title>
        <authorList>
            <person name="Bailey P.C."/>
            <person name="Martin C."/>
            <person name="Toledo-Ortiz G."/>
            <person name="Quail P.H."/>
            <person name="Huq E."/>
            <person name="Heim M.A."/>
            <person name="Jakoby M."/>
            <person name="Werber M."/>
            <person name="Weisshaar B."/>
        </authorList>
    </citation>
    <scope>GENE FAMILY</scope>
    <scope>NOMENCLATURE</scope>
</reference>
<dbReference type="EMBL" id="AF085279">
    <property type="protein sequence ID" value="AAD25935.1"/>
    <property type="molecule type" value="Genomic_DNA"/>
</dbReference>
<dbReference type="EMBL" id="AF488586">
    <property type="protein sequence ID" value="AAM10943.1"/>
    <property type="molecule type" value="mRNA"/>
</dbReference>
<dbReference type="EMBL" id="CP002685">
    <property type="protein sequence ID" value="AEC09795.1"/>
    <property type="molecule type" value="Genomic_DNA"/>
</dbReference>
<dbReference type="EMBL" id="BT029997">
    <property type="protein sequence ID" value="ABN04735.1"/>
    <property type="molecule type" value="mRNA"/>
</dbReference>
<dbReference type="EMBL" id="BT030051">
    <property type="protein sequence ID" value="ABN04789.1"/>
    <property type="molecule type" value="mRNA"/>
</dbReference>
<dbReference type="PIR" id="E84826">
    <property type="entry name" value="E84826"/>
</dbReference>
<dbReference type="RefSeq" id="NP_181549.1">
    <property type="nucleotide sequence ID" value="NM_129578.4"/>
</dbReference>
<dbReference type="SMR" id="Q9XEF0"/>
<dbReference type="BioGRID" id="3949">
    <property type="interactions" value="2"/>
</dbReference>
<dbReference type="FunCoup" id="Q9XEF0">
    <property type="interactions" value="109"/>
</dbReference>
<dbReference type="IntAct" id="Q9XEF0">
    <property type="interactions" value="2"/>
</dbReference>
<dbReference type="STRING" id="3702.Q9XEF0"/>
<dbReference type="PaxDb" id="3702-AT2G40200.1"/>
<dbReference type="ProteomicsDB" id="240769"/>
<dbReference type="EnsemblPlants" id="AT2G40200.1">
    <property type="protein sequence ID" value="AT2G40200.1"/>
    <property type="gene ID" value="AT2G40200"/>
</dbReference>
<dbReference type="GeneID" id="818611"/>
<dbReference type="Gramene" id="AT2G40200.1">
    <property type="protein sequence ID" value="AT2G40200.1"/>
    <property type="gene ID" value="AT2G40200"/>
</dbReference>
<dbReference type="KEGG" id="ath:AT2G40200"/>
<dbReference type="Araport" id="AT2G40200"/>
<dbReference type="TAIR" id="AT2G40200"/>
<dbReference type="eggNOG" id="ENOG502RDXR">
    <property type="taxonomic scope" value="Eukaryota"/>
</dbReference>
<dbReference type="HOGENOM" id="CLU_063967_2_1_1"/>
<dbReference type="InParanoid" id="Q9XEF0"/>
<dbReference type="OMA" id="SKAFMVP"/>
<dbReference type="PhylomeDB" id="Q9XEF0"/>
<dbReference type="PRO" id="PR:Q9XEF0"/>
<dbReference type="Proteomes" id="UP000006548">
    <property type="component" value="Chromosome 2"/>
</dbReference>
<dbReference type="ExpressionAtlas" id="Q9XEF0">
    <property type="expression patterns" value="baseline and differential"/>
</dbReference>
<dbReference type="GO" id="GO:0005634">
    <property type="term" value="C:nucleus"/>
    <property type="evidence" value="ECO:0007669"/>
    <property type="project" value="UniProtKB-SubCell"/>
</dbReference>
<dbReference type="GO" id="GO:0003677">
    <property type="term" value="F:DNA binding"/>
    <property type="evidence" value="ECO:0007669"/>
    <property type="project" value="UniProtKB-KW"/>
</dbReference>
<dbReference type="GO" id="GO:0003700">
    <property type="term" value="F:DNA-binding transcription factor activity"/>
    <property type="evidence" value="ECO:0000250"/>
    <property type="project" value="TAIR"/>
</dbReference>
<dbReference type="GO" id="GO:0046983">
    <property type="term" value="F:protein dimerization activity"/>
    <property type="evidence" value="ECO:0007669"/>
    <property type="project" value="InterPro"/>
</dbReference>
<dbReference type="GO" id="GO:0006355">
    <property type="term" value="P:regulation of DNA-templated transcription"/>
    <property type="evidence" value="ECO:0000304"/>
    <property type="project" value="TAIR"/>
</dbReference>
<dbReference type="CDD" id="cd04873">
    <property type="entry name" value="ACT_UUR-ACR-like"/>
    <property type="match status" value="1"/>
</dbReference>
<dbReference type="CDD" id="cd11455">
    <property type="entry name" value="bHLH_AtAIG1_like"/>
    <property type="match status" value="1"/>
</dbReference>
<dbReference type="Gene3D" id="4.10.280.10">
    <property type="entry name" value="Helix-loop-helix DNA-binding domain"/>
    <property type="match status" value="1"/>
</dbReference>
<dbReference type="InterPro" id="IPR045847">
    <property type="entry name" value="AIG1-like"/>
</dbReference>
<dbReference type="InterPro" id="IPR011598">
    <property type="entry name" value="bHLH_dom"/>
</dbReference>
<dbReference type="InterPro" id="IPR036638">
    <property type="entry name" value="HLH_DNA-bd_sf"/>
</dbReference>
<dbReference type="PANTHER" id="PTHR45844">
    <property type="entry name" value="TRANSCRIPTION FACTOR BHLH30"/>
    <property type="match status" value="1"/>
</dbReference>
<dbReference type="PANTHER" id="PTHR45844:SF18">
    <property type="entry name" value="TRANSCRIPTION FACTOR BHLH51"/>
    <property type="match status" value="1"/>
</dbReference>
<dbReference type="Pfam" id="PF00010">
    <property type="entry name" value="HLH"/>
    <property type="match status" value="1"/>
</dbReference>
<dbReference type="SMART" id="SM00353">
    <property type="entry name" value="HLH"/>
    <property type="match status" value="1"/>
</dbReference>
<dbReference type="SUPFAM" id="SSF47459">
    <property type="entry name" value="HLH, helix-loop-helix DNA-binding domain"/>
    <property type="match status" value="1"/>
</dbReference>
<dbReference type="PROSITE" id="PS50888">
    <property type="entry name" value="BHLH"/>
    <property type="match status" value="1"/>
</dbReference>
<keyword id="KW-0238">DNA-binding</keyword>
<keyword id="KW-0539">Nucleus</keyword>
<keyword id="KW-1185">Reference proteome</keyword>
<keyword id="KW-0804">Transcription</keyword>
<keyword id="KW-0805">Transcription regulation</keyword>
<name>BH051_ARATH</name>
<sequence>MENSYDSSKWSDSTTPYMVSWSLQSESSDSDWNRFNLGFSSSSFGGNFPADDCVGGIEKAESLSRSHRLAEKRRRDRINSHLTALRKLVPNSDKLDKAALLATVIEQVKELKQKAAESPIFQDLPTEADEVTVQPETISDFESNTNTIIFKASFCCEDQPEAISEIIRVLTKLQLETIQAEIISVGGRMRINFILKDSNCNETTNIAASAKALKQSLCSALNRITSSSTTTSSVCRIRSKRQRWFLSSHYSHNE</sequence>
<feature type="chain" id="PRO_0000358748" description="Transcription factor bHLH51">
    <location>
        <begin position="1"/>
        <end position="254"/>
    </location>
</feature>
<feature type="domain" description="bHLH" evidence="1">
    <location>
        <begin position="62"/>
        <end position="111"/>
    </location>
</feature>